<comment type="function">
    <text evidence="1">Catalyzes the formation of 6,7-dimethyl-8-ribityllumazine by condensation of 5-amino-6-(D-ribitylamino)uracil with 3,4-dihydroxy-2-butanone 4-phosphate. This is the penultimate step in the biosynthesis of riboflavin.</text>
</comment>
<comment type="catalytic activity">
    <reaction evidence="1">
        <text>(2S)-2-hydroxy-3-oxobutyl phosphate + 5-amino-6-(D-ribitylamino)uracil = 6,7-dimethyl-8-(1-D-ribityl)lumazine + phosphate + 2 H2O + H(+)</text>
        <dbReference type="Rhea" id="RHEA:26152"/>
        <dbReference type="ChEBI" id="CHEBI:15377"/>
        <dbReference type="ChEBI" id="CHEBI:15378"/>
        <dbReference type="ChEBI" id="CHEBI:15934"/>
        <dbReference type="ChEBI" id="CHEBI:43474"/>
        <dbReference type="ChEBI" id="CHEBI:58201"/>
        <dbReference type="ChEBI" id="CHEBI:58830"/>
        <dbReference type="EC" id="2.5.1.78"/>
    </reaction>
</comment>
<comment type="pathway">
    <text evidence="1">Cofactor biosynthesis; riboflavin biosynthesis; riboflavin from 2-hydroxy-3-oxobutyl phosphate and 5-amino-6-(D-ribitylamino)uracil: step 1/2.</text>
</comment>
<comment type="similarity">
    <text evidence="1">Belongs to the DMRL synthase family.</text>
</comment>
<dbReference type="EC" id="2.5.1.78" evidence="1"/>
<dbReference type="EMBL" id="CP000538">
    <property type="protein sequence ID" value="EAQ73329.1"/>
    <property type="molecule type" value="Genomic_DNA"/>
</dbReference>
<dbReference type="SMR" id="A1VYA3"/>
<dbReference type="KEGG" id="cjj:CJJ81176_0406"/>
<dbReference type="eggNOG" id="COG0054">
    <property type="taxonomic scope" value="Bacteria"/>
</dbReference>
<dbReference type="HOGENOM" id="CLU_089358_1_1_7"/>
<dbReference type="UniPathway" id="UPA00275">
    <property type="reaction ID" value="UER00404"/>
</dbReference>
<dbReference type="Proteomes" id="UP000000646">
    <property type="component" value="Chromosome"/>
</dbReference>
<dbReference type="GO" id="GO:0005829">
    <property type="term" value="C:cytosol"/>
    <property type="evidence" value="ECO:0007669"/>
    <property type="project" value="TreeGrafter"/>
</dbReference>
<dbReference type="GO" id="GO:0009349">
    <property type="term" value="C:riboflavin synthase complex"/>
    <property type="evidence" value="ECO:0007669"/>
    <property type="project" value="InterPro"/>
</dbReference>
<dbReference type="GO" id="GO:0000906">
    <property type="term" value="F:6,7-dimethyl-8-ribityllumazine synthase activity"/>
    <property type="evidence" value="ECO:0007669"/>
    <property type="project" value="UniProtKB-UniRule"/>
</dbReference>
<dbReference type="GO" id="GO:0009231">
    <property type="term" value="P:riboflavin biosynthetic process"/>
    <property type="evidence" value="ECO:0007669"/>
    <property type="project" value="UniProtKB-UniRule"/>
</dbReference>
<dbReference type="CDD" id="cd09209">
    <property type="entry name" value="Lumazine_synthase-I"/>
    <property type="match status" value="1"/>
</dbReference>
<dbReference type="FunFam" id="3.40.50.960:FF:000001">
    <property type="entry name" value="6,7-dimethyl-8-ribityllumazine synthase"/>
    <property type="match status" value="1"/>
</dbReference>
<dbReference type="Gene3D" id="3.40.50.960">
    <property type="entry name" value="Lumazine/riboflavin synthase"/>
    <property type="match status" value="1"/>
</dbReference>
<dbReference type="HAMAP" id="MF_00178">
    <property type="entry name" value="Lumazine_synth"/>
    <property type="match status" value="1"/>
</dbReference>
<dbReference type="InterPro" id="IPR034964">
    <property type="entry name" value="LS"/>
</dbReference>
<dbReference type="InterPro" id="IPR002180">
    <property type="entry name" value="LS/RS"/>
</dbReference>
<dbReference type="InterPro" id="IPR036467">
    <property type="entry name" value="LS/RS_sf"/>
</dbReference>
<dbReference type="NCBIfam" id="TIGR00114">
    <property type="entry name" value="lumazine-synth"/>
    <property type="match status" value="1"/>
</dbReference>
<dbReference type="NCBIfam" id="NF000812">
    <property type="entry name" value="PRK00061.1-4"/>
    <property type="match status" value="1"/>
</dbReference>
<dbReference type="PANTHER" id="PTHR21058:SF0">
    <property type="entry name" value="6,7-DIMETHYL-8-RIBITYLLUMAZINE SYNTHASE"/>
    <property type="match status" value="1"/>
</dbReference>
<dbReference type="PANTHER" id="PTHR21058">
    <property type="entry name" value="6,7-DIMETHYL-8-RIBITYLLUMAZINE SYNTHASE DMRL SYNTHASE LUMAZINE SYNTHASE"/>
    <property type="match status" value="1"/>
</dbReference>
<dbReference type="Pfam" id="PF00885">
    <property type="entry name" value="DMRL_synthase"/>
    <property type="match status" value="1"/>
</dbReference>
<dbReference type="SUPFAM" id="SSF52121">
    <property type="entry name" value="Lumazine synthase"/>
    <property type="match status" value="1"/>
</dbReference>
<organism>
    <name type="scientific">Campylobacter jejuni subsp. jejuni serotype O:23/36 (strain 81-176)</name>
    <dbReference type="NCBI Taxonomy" id="354242"/>
    <lineage>
        <taxon>Bacteria</taxon>
        <taxon>Pseudomonadati</taxon>
        <taxon>Campylobacterota</taxon>
        <taxon>Epsilonproteobacteria</taxon>
        <taxon>Campylobacterales</taxon>
        <taxon>Campylobacteraceae</taxon>
        <taxon>Campylobacter</taxon>
    </lineage>
</organism>
<feature type="chain" id="PRO_1000040392" description="6,7-dimethyl-8-ribityllumazine synthase">
    <location>
        <begin position="1"/>
        <end position="154"/>
    </location>
</feature>
<feature type="active site" description="Proton donor" evidence="1">
    <location>
        <position position="89"/>
    </location>
</feature>
<feature type="binding site" evidence="1">
    <location>
        <position position="23"/>
    </location>
    <ligand>
        <name>5-amino-6-(D-ribitylamino)uracil</name>
        <dbReference type="ChEBI" id="CHEBI:15934"/>
    </ligand>
</feature>
<feature type="binding site" evidence="1">
    <location>
        <begin position="57"/>
        <end position="59"/>
    </location>
    <ligand>
        <name>5-amino-6-(D-ribitylamino)uracil</name>
        <dbReference type="ChEBI" id="CHEBI:15934"/>
    </ligand>
</feature>
<feature type="binding site" evidence="1">
    <location>
        <begin position="81"/>
        <end position="83"/>
    </location>
    <ligand>
        <name>5-amino-6-(D-ribitylamino)uracil</name>
        <dbReference type="ChEBI" id="CHEBI:15934"/>
    </ligand>
</feature>
<feature type="binding site" evidence="1">
    <location>
        <begin position="86"/>
        <end position="87"/>
    </location>
    <ligand>
        <name>(2S)-2-hydroxy-3-oxobutyl phosphate</name>
        <dbReference type="ChEBI" id="CHEBI:58830"/>
    </ligand>
</feature>
<feature type="binding site" evidence="1">
    <location>
        <position position="114"/>
    </location>
    <ligand>
        <name>5-amino-6-(D-ribitylamino)uracil</name>
        <dbReference type="ChEBI" id="CHEBI:15934"/>
    </ligand>
</feature>
<feature type="binding site" evidence="1">
    <location>
        <position position="128"/>
    </location>
    <ligand>
        <name>(2S)-2-hydroxy-3-oxobutyl phosphate</name>
        <dbReference type="ChEBI" id="CHEBI:58830"/>
    </ligand>
</feature>
<reference key="1">
    <citation type="submission" date="2006-12" db="EMBL/GenBank/DDBJ databases">
        <authorList>
            <person name="Fouts D.E."/>
            <person name="Nelson K.E."/>
            <person name="Sebastian Y."/>
        </authorList>
    </citation>
    <scope>NUCLEOTIDE SEQUENCE [LARGE SCALE GENOMIC DNA]</scope>
    <source>
        <strain>81-176</strain>
    </source>
</reference>
<sequence>MNIIEGKLNLDSNTKIAIINARFNHIITDRLVEGAKDAFLRHGGKEENLSLILVPGAFELPYALKKAIESKKFDAICCVGAVIRGSTPHFDYVSAETTKGIANVSLNHNIPVSFGVLTTDTIEQAIERAGSKAGNKGFEAMTTVIEMLNLSKEL</sequence>
<protein>
    <recommendedName>
        <fullName evidence="1">6,7-dimethyl-8-ribityllumazine synthase</fullName>
        <shortName evidence="1">DMRL synthase</shortName>
        <shortName evidence="1">LS</shortName>
        <shortName evidence="1">Lumazine synthase</shortName>
        <ecNumber evidence="1">2.5.1.78</ecNumber>
    </recommendedName>
</protein>
<proteinExistence type="inferred from homology"/>
<keyword id="KW-0686">Riboflavin biosynthesis</keyword>
<keyword id="KW-0808">Transferase</keyword>
<name>RISB_CAMJJ</name>
<accession>A1VYA3</accession>
<evidence type="ECO:0000255" key="1">
    <source>
        <dbReference type="HAMAP-Rule" id="MF_00178"/>
    </source>
</evidence>
<gene>
    <name evidence="1" type="primary">ribH</name>
    <name type="ordered locus">CJJ81176_0406</name>
</gene>